<keyword id="KW-0963">Cytoplasm</keyword>
<keyword id="KW-0489">Methyltransferase</keyword>
<keyword id="KW-0949">S-adenosyl-L-methionine</keyword>
<keyword id="KW-0808">Transferase</keyword>
<keyword id="KW-0819">tRNA processing</keyword>
<comment type="function">
    <text evidence="1">Specifically methylates the adenine in position 37 of tRNA(1)(Val) (anticodon cmo5UAC).</text>
</comment>
<comment type="catalytic activity">
    <reaction evidence="1">
        <text>adenosine(37) in tRNA1(Val) + S-adenosyl-L-methionine = N(6)-methyladenosine(37) in tRNA1(Val) + S-adenosyl-L-homocysteine + H(+)</text>
        <dbReference type="Rhea" id="RHEA:43160"/>
        <dbReference type="Rhea" id="RHEA-COMP:10369"/>
        <dbReference type="Rhea" id="RHEA-COMP:10370"/>
        <dbReference type="ChEBI" id="CHEBI:15378"/>
        <dbReference type="ChEBI" id="CHEBI:57856"/>
        <dbReference type="ChEBI" id="CHEBI:59789"/>
        <dbReference type="ChEBI" id="CHEBI:74411"/>
        <dbReference type="ChEBI" id="CHEBI:74449"/>
        <dbReference type="EC" id="2.1.1.223"/>
    </reaction>
</comment>
<comment type="subcellular location">
    <subcellularLocation>
        <location evidence="1">Cytoplasm</location>
    </subcellularLocation>
</comment>
<comment type="similarity">
    <text evidence="1">Belongs to the methyltransferase superfamily. tRNA (adenine-N(6)-)-methyltransferase family.</text>
</comment>
<comment type="sequence caution" evidence="2">
    <conflict type="erroneous initiation">
        <sequence resource="EMBL-CDS" id="ACT05932"/>
    </conflict>
</comment>
<protein>
    <recommendedName>
        <fullName evidence="1">tRNA1(Val) (adenine(37)-N6)-methyltransferase</fullName>
        <ecNumber evidence="1">2.1.1.223</ecNumber>
    </recommendedName>
    <alternativeName>
        <fullName evidence="1">tRNA m6A37 methyltransferase</fullName>
    </alternativeName>
</protein>
<evidence type="ECO:0000255" key="1">
    <source>
        <dbReference type="HAMAP-Rule" id="MF_01872"/>
    </source>
</evidence>
<evidence type="ECO:0000305" key="2"/>
<name>TRMN6_DICC1</name>
<organism>
    <name type="scientific">Dickeya chrysanthemi (strain Ech1591)</name>
    <name type="common">Dickeya zeae (strain Ech1591)</name>
    <dbReference type="NCBI Taxonomy" id="561229"/>
    <lineage>
        <taxon>Bacteria</taxon>
        <taxon>Pseudomonadati</taxon>
        <taxon>Pseudomonadota</taxon>
        <taxon>Gammaproteobacteria</taxon>
        <taxon>Enterobacterales</taxon>
        <taxon>Pectobacteriaceae</taxon>
        <taxon>Dickeya</taxon>
    </lineage>
</organism>
<feature type="chain" id="PRO_0000387348" description="tRNA1(Val) (adenine(37)-N6)-methyltransferase">
    <location>
        <begin position="1"/>
        <end position="253"/>
    </location>
</feature>
<dbReference type="EC" id="2.1.1.223" evidence="1"/>
<dbReference type="EMBL" id="CP001655">
    <property type="protein sequence ID" value="ACT05932.1"/>
    <property type="status" value="ALT_INIT"/>
    <property type="molecule type" value="Genomic_DNA"/>
</dbReference>
<dbReference type="RefSeq" id="WP_038926947.1">
    <property type="nucleotide sequence ID" value="NC_012912.1"/>
</dbReference>
<dbReference type="SMR" id="C6CNL2"/>
<dbReference type="STRING" id="561229.Dd1591_1060"/>
<dbReference type="GeneID" id="45079187"/>
<dbReference type="KEGG" id="dze:Dd1591_1060"/>
<dbReference type="eggNOG" id="COG4123">
    <property type="taxonomic scope" value="Bacteria"/>
</dbReference>
<dbReference type="HOGENOM" id="CLU_061983_0_0_6"/>
<dbReference type="OrthoDB" id="5383291at2"/>
<dbReference type="Proteomes" id="UP000002735">
    <property type="component" value="Chromosome"/>
</dbReference>
<dbReference type="GO" id="GO:0005737">
    <property type="term" value="C:cytoplasm"/>
    <property type="evidence" value="ECO:0007669"/>
    <property type="project" value="UniProtKB-SubCell"/>
</dbReference>
<dbReference type="GO" id="GO:0003676">
    <property type="term" value="F:nucleic acid binding"/>
    <property type="evidence" value="ECO:0007669"/>
    <property type="project" value="InterPro"/>
</dbReference>
<dbReference type="GO" id="GO:0016430">
    <property type="term" value="F:tRNA (adenine-N6)-methyltransferase activity"/>
    <property type="evidence" value="ECO:0007669"/>
    <property type="project" value="UniProtKB-UniRule"/>
</dbReference>
<dbReference type="GO" id="GO:0032259">
    <property type="term" value="P:methylation"/>
    <property type="evidence" value="ECO:0007669"/>
    <property type="project" value="UniProtKB-KW"/>
</dbReference>
<dbReference type="GO" id="GO:0008033">
    <property type="term" value="P:tRNA processing"/>
    <property type="evidence" value="ECO:0007669"/>
    <property type="project" value="UniProtKB-UniRule"/>
</dbReference>
<dbReference type="CDD" id="cd02440">
    <property type="entry name" value="AdoMet_MTases"/>
    <property type="match status" value="1"/>
</dbReference>
<dbReference type="Gene3D" id="3.40.50.150">
    <property type="entry name" value="Vaccinia Virus protein VP39"/>
    <property type="match status" value="1"/>
</dbReference>
<dbReference type="HAMAP" id="MF_01872">
    <property type="entry name" value="tRNA_methyltr_YfiC"/>
    <property type="match status" value="1"/>
</dbReference>
<dbReference type="InterPro" id="IPR002052">
    <property type="entry name" value="DNA_methylase_N6_adenine_CS"/>
</dbReference>
<dbReference type="InterPro" id="IPR029063">
    <property type="entry name" value="SAM-dependent_MTases_sf"/>
</dbReference>
<dbReference type="InterPro" id="IPR007848">
    <property type="entry name" value="Small_mtfrase_dom"/>
</dbReference>
<dbReference type="InterPro" id="IPR050210">
    <property type="entry name" value="tRNA_Adenine-N(6)_MTase"/>
</dbReference>
<dbReference type="InterPro" id="IPR022882">
    <property type="entry name" value="tRNA_adenine-N6_MeTrfase"/>
</dbReference>
<dbReference type="NCBIfam" id="NF047853">
    <property type="entry name" value="tRm6a37MtseTrmN"/>
    <property type="match status" value="1"/>
</dbReference>
<dbReference type="PANTHER" id="PTHR47739">
    <property type="entry name" value="TRNA1(VAL) (ADENINE(37)-N6)-METHYLTRANSFERASE"/>
    <property type="match status" value="1"/>
</dbReference>
<dbReference type="PANTHER" id="PTHR47739:SF1">
    <property type="entry name" value="TRNA1(VAL) (ADENINE(37)-N6)-METHYLTRANSFERASE"/>
    <property type="match status" value="1"/>
</dbReference>
<dbReference type="Pfam" id="PF05175">
    <property type="entry name" value="MTS"/>
    <property type="match status" value="1"/>
</dbReference>
<dbReference type="SUPFAM" id="SSF53335">
    <property type="entry name" value="S-adenosyl-L-methionine-dependent methyltransferases"/>
    <property type="match status" value="1"/>
</dbReference>
<dbReference type="PROSITE" id="PS00092">
    <property type="entry name" value="N6_MTASE"/>
    <property type="match status" value="1"/>
</dbReference>
<gene>
    <name type="ordered locus">Dd1591_1060</name>
</gene>
<proteinExistence type="inferred from homology"/>
<reference key="1">
    <citation type="submission" date="2009-06" db="EMBL/GenBank/DDBJ databases">
        <title>Complete sequence of Dickeya zeae Ech1591.</title>
        <authorList>
            <consortium name="US DOE Joint Genome Institute"/>
            <person name="Lucas S."/>
            <person name="Copeland A."/>
            <person name="Lapidus A."/>
            <person name="Glavina del Rio T."/>
            <person name="Tice H."/>
            <person name="Bruce D."/>
            <person name="Goodwin L."/>
            <person name="Pitluck S."/>
            <person name="Chertkov O."/>
            <person name="Brettin T."/>
            <person name="Detter J.C."/>
            <person name="Han C."/>
            <person name="Larimer F."/>
            <person name="Land M."/>
            <person name="Hauser L."/>
            <person name="Kyrpides N."/>
            <person name="Ovchinnikova G."/>
            <person name="Balakrishnan V."/>
            <person name="Glasner J."/>
            <person name="Perna N.T."/>
        </authorList>
    </citation>
    <scope>NUCLEOTIDE SEQUENCE [LARGE SCALE GENOMIC DNA]</scope>
    <source>
        <strain>Ech1591</strain>
    </source>
</reference>
<accession>C6CNL2</accession>
<sequence>MTFQQHTPALRTGGFTFKQFFVAHDRCAMKVGTDGVLLGAWVPLREETRILDIGCGSGLLGLMLAQRSGGRFPIDGVELDAAASTQAADNAAASPWADCIRIYPADIVGYAQTATRRYSLIVSNPPYFSPGVDCASAQRAQARYTTTLTHDALLDCAGRLLEPDGRFCVVLPAVSAEDFLALAQRSAWRADIRVDVADSASRPVNRVLLSLRRGGESEINAIALSRTSLIIRDDDRRYSSSFQALTRDFYLSM</sequence>